<protein>
    <recommendedName>
        <fullName evidence="1">Methylglyoxal synthase</fullName>
        <shortName evidence="1">MGS</shortName>
        <ecNumber evidence="1">4.2.3.3</ecNumber>
    </recommendedName>
</protein>
<keyword id="KW-0456">Lyase</keyword>
<keyword id="KW-1185">Reference proteome</keyword>
<name>MGSA_PROMH</name>
<sequence length="152" mass="16999">MEQIDRTLATEKNIALVAHDHCKSSLLEWVKNNSEQLSHHKLFATGTTGNLVNHHTGLEVTQMLSGPMGGDQQIGAMIAEKKIDILIFFWDPLNAVPHDPDVKALLRLATVWNIPVATNRATANFLISSPLFSQESKIKIPDYEGYLKERLK</sequence>
<reference key="1">
    <citation type="journal article" date="2008" name="J. Bacteriol.">
        <title>Complete genome sequence of uropathogenic Proteus mirabilis, a master of both adherence and motility.</title>
        <authorList>
            <person name="Pearson M.M."/>
            <person name="Sebaihia M."/>
            <person name="Churcher C."/>
            <person name="Quail M.A."/>
            <person name="Seshasayee A.S."/>
            <person name="Luscombe N.M."/>
            <person name="Abdellah Z."/>
            <person name="Arrosmith C."/>
            <person name="Atkin B."/>
            <person name="Chillingworth T."/>
            <person name="Hauser H."/>
            <person name="Jagels K."/>
            <person name="Moule S."/>
            <person name="Mungall K."/>
            <person name="Norbertczak H."/>
            <person name="Rabbinowitsch E."/>
            <person name="Walker D."/>
            <person name="Whithead S."/>
            <person name="Thomson N.R."/>
            <person name="Rather P.N."/>
            <person name="Parkhill J."/>
            <person name="Mobley H.L.T."/>
        </authorList>
    </citation>
    <scope>NUCLEOTIDE SEQUENCE [LARGE SCALE GENOMIC DNA]</scope>
    <source>
        <strain>HI4320</strain>
    </source>
</reference>
<feature type="chain" id="PRO_1000129000" description="Methylglyoxal synthase">
    <location>
        <begin position="1"/>
        <end position="152"/>
    </location>
</feature>
<feature type="domain" description="MGS-like" evidence="1">
    <location>
        <begin position="6"/>
        <end position="152"/>
    </location>
</feature>
<feature type="active site" description="Proton donor/acceptor" evidence="1">
    <location>
        <position position="71"/>
    </location>
</feature>
<feature type="binding site" evidence="1">
    <location>
        <position position="19"/>
    </location>
    <ligand>
        <name>substrate</name>
    </ligand>
</feature>
<feature type="binding site" evidence="1">
    <location>
        <position position="23"/>
    </location>
    <ligand>
        <name>substrate</name>
    </ligand>
</feature>
<feature type="binding site" evidence="1">
    <location>
        <begin position="45"/>
        <end position="48"/>
    </location>
    <ligand>
        <name>substrate</name>
    </ligand>
</feature>
<feature type="binding site" evidence="1">
    <location>
        <begin position="65"/>
        <end position="66"/>
    </location>
    <ligand>
        <name>substrate</name>
    </ligand>
</feature>
<feature type="binding site" evidence="1">
    <location>
        <position position="98"/>
    </location>
    <ligand>
        <name>substrate</name>
    </ligand>
</feature>
<gene>
    <name evidence="1" type="primary">mgsA</name>
    <name type="ordered locus">PMI0790</name>
</gene>
<dbReference type="EC" id="4.2.3.3" evidence="1"/>
<dbReference type="EMBL" id="AM942759">
    <property type="protein sequence ID" value="CAR41811.1"/>
    <property type="molecule type" value="Genomic_DNA"/>
</dbReference>
<dbReference type="RefSeq" id="WP_004244689.1">
    <property type="nucleotide sequence ID" value="NC_010554.1"/>
</dbReference>
<dbReference type="SMR" id="B4EVE1"/>
<dbReference type="EnsemblBacteria" id="CAR41811">
    <property type="protein sequence ID" value="CAR41811"/>
    <property type="gene ID" value="PMI0790"/>
</dbReference>
<dbReference type="GeneID" id="6803408"/>
<dbReference type="KEGG" id="pmr:PMI0790"/>
<dbReference type="eggNOG" id="COG1803">
    <property type="taxonomic scope" value="Bacteria"/>
</dbReference>
<dbReference type="HOGENOM" id="CLU_120420_0_1_6"/>
<dbReference type="Proteomes" id="UP000008319">
    <property type="component" value="Chromosome"/>
</dbReference>
<dbReference type="GO" id="GO:0005829">
    <property type="term" value="C:cytosol"/>
    <property type="evidence" value="ECO:0007669"/>
    <property type="project" value="TreeGrafter"/>
</dbReference>
<dbReference type="GO" id="GO:0008929">
    <property type="term" value="F:methylglyoxal synthase activity"/>
    <property type="evidence" value="ECO:0007669"/>
    <property type="project" value="UniProtKB-UniRule"/>
</dbReference>
<dbReference type="GO" id="GO:0019242">
    <property type="term" value="P:methylglyoxal biosynthetic process"/>
    <property type="evidence" value="ECO:0007669"/>
    <property type="project" value="UniProtKB-UniRule"/>
</dbReference>
<dbReference type="CDD" id="cd01422">
    <property type="entry name" value="MGS"/>
    <property type="match status" value="1"/>
</dbReference>
<dbReference type="FunFam" id="3.40.50.1380:FF:000002">
    <property type="entry name" value="Methylglyoxal synthase"/>
    <property type="match status" value="1"/>
</dbReference>
<dbReference type="Gene3D" id="3.40.50.1380">
    <property type="entry name" value="Methylglyoxal synthase-like domain"/>
    <property type="match status" value="1"/>
</dbReference>
<dbReference type="HAMAP" id="MF_00549">
    <property type="entry name" value="Methylglyoxal_synth"/>
    <property type="match status" value="1"/>
</dbReference>
<dbReference type="InterPro" id="IPR004363">
    <property type="entry name" value="Methylgl_synth"/>
</dbReference>
<dbReference type="InterPro" id="IPR018148">
    <property type="entry name" value="Methylglyoxal_synth_AS"/>
</dbReference>
<dbReference type="InterPro" id="IPR011607">
    <property type="entry name" value="MGS-like_dom"/>
</dbReference>
<dbReference type="InterPro" id="IPR036914">
    <property type="entry name" value="MGS-like_dom_sf"/>
</dbReference>
<dbReference type="NCBIfam" id="TIGR00160">
    <property type="entry name" value="MGSA"/>
    <property type="match status" value="1"/>
</dbReference>
<dbReference type="NCBIfam" id="NF003559">
    <property type="entry name" value="PRK05234.1"/>
    <property type="match status" value="1"/>
</dbReference>
<dbReference type="PANTHER" id="PTHR30492">
    <property type="entry name" value="METHYLGLYOXAL SYNTHASE"/>
    <property type="match status" value="1"/>
</dbReference>
<dbReference type="PANTHER" id="PTHR30492:SF0">
    <property type="entry name" value="METHYLGLYOXAL SYNTHASE"/>
    <property type="match status" value="1"/>
</dbReference>
<dbReference type="Pfam" id="PF02142">
    <property type="entry name" value="MGS"/>
    <property type="match status" value="1"/>
</dbReference>
<dbReference type="PIRSF" id="PIRSF006614">
    <property type="entry name" value="Methylglyox_syn"/>
    <property type="match status" value="1"/>
</dbReference>
<dbReference type="SMART" id="SM00851">
    <property type="entry name" value="MGS"/>
    <property type="match status" value="1"/>
</dbReference>
<dbReference type="SUPFAM" id="SSF52335">
    <property type="entry name" value="Methylglyoxal synthase-like"/>
    <property type="match status" value="1"/>
</dbReference>
<dbReference type="PROSITE" id="PS01335">
    <property type="entry name" value="METHYLGLYOXAL_SYNTH"/>
    <property type="match status" value="1"/>
</dbReference>
<dbReference type="PROSITE" id="PS51855">
    <property type="entry name" value="MGS"/>
    <property type="match status" value="1"/>
</dbReference>
<proteinExistence type="inferred from homology"/>
<accession>B4EVE1</accession>
<comment type="function">
    <text evidence="1">Catalyzes the formation of methylglyoxal from dihydroxyacetone phosphate.</text>
</comment>
<comment type="catalytic activity">
    <reaction evidence="1">
        <text>dihydroxyacetone phosphate = methylglyoxal + phosphate</text>
        <dbReference type="Rhea" id="RHEA:17937"/>
        <dbReference type="ChEBI" id="CHEBI:17158"/>
        <dbReference type="ChEBI" id="CHEBI:43474"/>
        <dbReference type="ChEBI" id="CHEBI:57642"/>
        <dbReference type="EC" id="4.2.3.3"/>
    </reaction>
</comment>
<comment type="similarity">
    <text evidence="1">Belongs to the methylglyoxal synthase family.</text>
</comment>
<evidence type="ECO:0000255" key="1">
    <source>
        <dbReference type="HAMAP-Rule" id="MF_00549"/>
    </source>
</evidence>
<organism>
    <name type="scientific">Proteus mirabilis (strain HI4320)</name>
    <dbReference type="NCBI Taxonomy" id="529507"/>
    <lineage>
        <taxon>Bacteria</taxon>
        <taxon>Pseudomonadati</taxon>
        <taxon>Pseudomonadota</taxon>
        <taxon>Gammaproteobacteria</taxon>
        <taxon>Enterobacterales</taxon>
        <taxon>Morganellaceae</taxon>
        <taxon>Proteus</taxon>
    </lineage>
</organism>